<protein>
    <recommendedName>
        <fullName evidence="4">Oxaloacetate tautomerase FAHD2, mitochondrial</fullName>
        <ecNumber evidence="2">5.3.2.2</ecNumber>
    </recommendedName>
    <alternativeName>
        <fullName evidence="4">Fumarylacetoacetate hydrolase domain-containing protein 2</fullName>
        <shortName evidence="4">FAH domain-containing protein 2</shortName>
    </alternativeName>
</protein>
<name>FAHD2_ORYSJ</name>
<comment type="function">
    <text evidence="2">Tautomerase that converts enol-oxaloacetate, a strong inhibitor of succinate dehydrogenase, to the physiological keto form of oxaloacetate.</text>
</comment>
<comment type="catalytic activity">
    <reaction evidence="2">
        <text>oxaloacetate = enol-oxaloacetate</text>
        <dbReference type="Rhea" id="RHEA:16021"/>
        <dbReference type="ChEBI" id="CHEBI:16452"/>
        <dbReference type="ChEBI" id="CHEBI:17479"/>
        <dbReference type="EC" id="5.3.2.2"/>
    </reaction>
    <physiologicalReaction direction="right-to-left" evidence="2">
        <dbReference type="Rhea" id="RHEA:16023"/>
    </physiologicalReaction>
</comment>
<comment type="cofactor">
    <cofactor evidence="1">
        <name>Mg(2+)</name>
        <dbReference type="ChEBI" id="CHEBI:18420"/>
    </cofactor>
    <cofactor evidence="1">
        <name>Mn(2+)</name>
        <dbReference type="ChEBI" id="CHEBI:29035"/>
    </cofactor>
    <text evidence="1">Requires a divalent metal cation for activity.</text>
</comment>
<comment type="subcellular location">
    <subcellularLocation>
        <location evidence="2">Mitochondrion</location>
    </subcellularLocation>
</comment>
<comment type="similarity">
    <text evidence="4">Belongs to the FAH family.</text>
</comment>
<comment type="sequence caution" evidence="4">
    <conflict type="erroneous gene model prediction">
        <sequence resource="EMBL-CDS" id="AAO39866"/>
    </conflict>
</comment>
<keyword id="KW-0413">Isomerase</keyword>
<keyword id="KW-0460">Magnesium</keyword>
<keyword id="KW-0479">Metal-binding</keyword>
<keyword id="KW-0496">Mitochondrion</keyword>
<keyword id="KW-1185">Reference proteome</keyword>
<keyword id="KW-0809">Transit peptide</keyword>
<organism>
    <name type="scientific">Oryza sativa subsp. japonica</name>
    <name type="common">Rice</name>
    <dbReference type="NCBI Taxonomy" id="39947"/>
    <lineage>
        <taxon>Eukaryota</taxon>
        <taxon>Viridiplantae</taxon>
        <taxon>Streptophyta</taxon>
        <taxon>Embryophyta</taxon>
        <taxon>Tracheophyta</taxon>
        <taxon>Spermatophyta</taxon>
        <taxon>Magnoliopsida</taxon>
        <taxon>Liliopsida</taxon>
        <taxon>Poales</taxon>
        <taxon>Poaceae</taxon>
        <taxon>BOP clade</taxon>
        <taxon>Oryzoideae</taxon>
        <taxon>Oryzeae</taxon>
        <taxon>Oryzinae</taxon>
        <taxon>Oryza</taxon>
        <taxon>Oryza sativa</taxon>
    </lineage>
</organism>
<sequence length="226" mass="24071">MAAAAQRLLAASTKIVGVGRNFVAHAKELGNPVPKEPVLFLKPTSSFLHAGVAGAAIEVPEPVESLHHEVELAVVISQRARDVPEASAMDFVGGYALALDMTARELQSAAKSAGLPWTLGKAQDTFTPISAVIPKSDVANPDDLELWLKVDDELRQKGSTSDMIFKIPSLISYISSIMTLMEGDVILTGTPEGVGPVRPGQKIKAGITGLIDVEFDVQKRKRSFST</sequence>
<feature type="transit peptide" description="Mitochondrion" evidence="3">
    <location>
        <begin position="1"/>
        <end position="30"/>
    </location>
</feature>
<feature type="chain" id="PRO_0000442053" description="Oxaloacetate tautomerase FAHD2, mitochondrial">
    <location>
        <begin position="31"/>
        <end position="226"/>
    </location>
</feature>
<feature type="binding site" evidence="1">
    <location>
        <position position="69"/>
    </location>
    <ligand>
        <name>Mg(2+)</name>
        <dbReference type="ChEBI" id="CHEBI:18420"/>
    </ligand>
</feature>
<feature type="binding site" evidence="1">
    <location>
        <position position="71"/>
    </location>
    <ligand>
        <name>Mg(2+)</name>
        <dbReference type="ChEBI" id="CHEBI:18420"/>
    </ligand>
</feature>
<feature type="binding site" evidence="1">
    <location>
        <position position="100"/>
    </location>
    <ligand>
        <name>Mg(2+)</name>
        <dbReference type="ChEBI" id="CHEBI:18420"/>
    </ligand>
</feature>
<reference key="1">
    <citation type="journal article" date="2005" name="Genome Res.">
        <title>Sequence, annotation, and analysis of synteny between rice chromosome 3 and diverged grass species.</title>
        <authorList>
            <consortium name="The rice chromosome 3 sequencing consortium"/>
            <person name="Buell C.R."/>
            <person name="Yuan Q."/>
            <person name="Ouyang S."/>
            <person name="Liu J."/>
            <person name="Zhu W."/>
            <person name="Wang A."/>
            <person name="Maiti R."/>
            <person name="Haas B."/>
            <person name="Wortman J."/>
            <person name="Pertea M."/>
            <person name="Jones K.M."/>
            <person name="Kim M."/>
            <person name="Overton L."/>
            <person name="Tsitrin T."/>
            <person name="Fadrosh D."/>
            <person name="Bera J."/>
            <person name="Weaver B."/>
            <person name="Jin S."/>
            <person name="Johri S."/>
            <person name="Reardon M."/>
            <person name="Webb K."/>
            <person name="Hill J."/>
            <person name="Moffat K."/>
            <person name="Tallon L."/>
            <person name="Van Aken S."/>
            <person name="Lewis M."/>
            <person name="Utterback T."/>
            <person name="Feldblyum T."/>
            <person name="Zismann V."/>
            <person name="Iobst S."/>
            <person name="Hsiao J."/>
            <person name="de Vazeille A.R."/>
            <person name="Salzberg S.L."/>
            <person name="White O."/>
            <person name="Fraser C.M."/>
            <person name="Yu Y."/>
            <person name="Kim H."/>
            <person name="Rambo T."/>
            <person name="Currie J."/>
            <person name="Collura K."/>
            <person name="Kernodle-Thompson S."/>
            <person name="Wei F."/>
            <person name="Kudrna K."/>
            <person name="Ammiraju J.S.S."/>
            <person name="Luo M."/>
            <person name="Goicoechea J.L."/>
            <person name="Wing R.A."/>
            <person name="Henry D."/>
            <person name="Oates R."/>
            <person name="Palmer M."/>
            <person name="Pries G."/>
            <person name="Saski C."/>
            <person name="Simmons J."/>
            <person name="Soderlund C."/>
            <person name="Nelson W."/>
            <person name="de la Bastide M."/>
            <person name="Spiegel L."/>
            <person name="Nascimento L."/>
            <person name="Huang E."/>
            <person name="Preston R."/>
            <person name="Zutavern T."/>
            <person name="Palmer L."/>
            <person name="O'Shaughnessy A."/>
            <person name="Dike S."/>
            <person name="McCombie W.R."/>
            <person name="Minx P."/>
            <person name="Cordum H."/>
            <person name="Wilson R."/>
            <person name="Jin W."/>
            <person name="Lee H.R."/>
            <person name="Jiang J."/>
            <person name="Jackson S."/>
        </authorList>
    </citation>
    <scope>NUCLEOTIDE SEQUENCE [LARGE SCALE GENOMIC DNA]</scope>
    <source>
        <strain>cv. Nipponbare</strain>
    </source>
</reference>
<reference key="2">
    <citation type="journal article" date="2005" name="Nature">
        <title>The map-based sequence of the rice genome.</title>
        <authorList>
            <consortium name="International rice genome sequencing project (IRGSP)"/>
        </authorList>
    </citation>
    <scope>NUCLEOTIDE SEQUENCE [LARGE SCALE GENOMIC DNA]</scope>
    <source>
        <strain>cv. Nipponbare</strain>
    </source>
</reference>
<reference key="3">
    <citation type="journal article" date="2008" name="Nucleic Acids Res.">
        <title>The rice annotation project database (RAP-DB): 2008 update.</title>
        <authorList>
            <consortium name="The rice annotation project (RAP)"/>
        </authorList>
    </citation>
    <scope>GENOME REANNOTATION</scope>
    <source>
        <strain>cv. Nipponbare</strain>
    </source>
</reference>
<reference key="4">
    <citation type="journal article" date="2013" name="Rice">
        <title>Improvement of the Oryza sativa Nipponbare reference genome using next generation sequence and optical map data.</title>
        <authorList>
            <person name="Kawahara Y."/>
            <person name="de la Bastide M."/>
            <person name="Hamilton J.P."/>
            <person name="Kanamori H."/>
            <person name="McCombie W.R."/>
            <person name="Ouyang S."/>
            <person name="Schwartz D.C."/>
            <person name="Tanaka T."/>
            <person name="Wu J."/>
            <person name="Zhou S."/>
            <person name="Childs K.L."/>
            <person name="Davidson R.M."/>
            <person name="Lin H."/>
            <person name="Quesada-Ocampo L."/>
            <person name="Vaillancourt B."/>
            <person name="Sakai H."/>
            <person name="Lee S.S."/>
            <person name="Kim J."/>
            <person name="Numa H."/>
            <person name="Itoh T."/>
            <person name="Buell C.R."/>
            <person name="Matsumoto T."/>
        </authorList>
    </citation>
    <scope>GENOME REANNOTATION</scope>
    <source>
        <strain>cv. Nipponbare</strain>
    </source>
</reference>
<reference key="5">
    <citation type="journal article" date="2005" name="PLoS Biol.">
        <title>The genomes of Oryza sativa: a history of duplications.</title>
        <authorList>
            <person name="Yu J."/>
            <person name="Wang J."/>
            <person name="Lin W."/>
            <person name="Li S."/>
            <person name="Li H."/>
            <person name="Zhou J."/>
            <person name="Ni P."/>
            <person name="Dong W."/>
            <person name="Hu S."/>
            <person name="Zeng C."/>
            <person name="Zhang J."/>
            <person name="Zhang Y."/>
            <person name="Li R."/>
            <person name="Xu Z."/>
            <person name="Li S."/>
            <person name="Li X."/>
            <person name="Zheng H."/>
            <person name="Cong L."/>
            <person name="Lin L."/>
            <person name="Yin J."/>
            <person name="Geng J."/>
            <person name="Li G."/>
            <person name="Shi J."/>
            <person name="Liu J."/>
            <person name="Lv H."/>
            <person name="Li J."/>
            <person name="Wang J."/>
            <person name="Deng Y."/>
            <person name="Ran L."/>
            <person name="Shi X."/>
            <person name="Wang X."/>
            <person name="Wu Q."/>
            <person name="Li C."/>
            <person name="Ren X."/>
            <person name="Wang J."/>
            <person name="Wang X."/>
            <person name="Li D."/>
            <person name="Liu D."/>
            <person name="Zhang X."/>
            <person name="Ji Z."/>
            <person name="Zhao W."/>
            <person name="Sun Y."/>
            <person name="Zhang Z."/>
            <person name="Bao J."/>
            <person name="Han Y."/>
            <person name="Dong L."/>
            <person name="Ji J."/>
            <person name="Chen P."/>
            <person name="Wu S."/>
            <person name="Liu J."/>
            <person name="Xiao Y."/>
            <person name="Bu D."/>
            <person name="Tan J."/>
            <person name="Yang L."/>
            <person name="Ye C."/>
            <person name="Zhang J."/>
            <person name="Xu J."/>
            <person name="Zhou Y."/>
            <person name="Yu Y."/>
            <person name="Zhang B."/>
            <person name="Zhuang S."/>
            <person name="Wei H."/>
            <person name="Liu B."/>
            <person name="Lei M."/>
            <person name="Yu H."/>
            <person name="Li Y."/>
            <person name="Xu H."/>
            <person name="Wei S."/>
            <person name="He X."/>
            <person name="Fang L."/>
            <person name="Zhang Z."/>
            <person name="Zhang Y."/>
            <person name="Huang X."/>
            <person name="Su Z."/>
            <person name="Tong W."/>
            <person name="Li J."/>
            <person name="Tong Z."/>
            <person name="Li S."/>
            <person name="Ye J."/>
            <person name="Wang L."/>
            <person name="Fang L."/>
            <person name="Lei T."/>
            <person name="Chen C.-S."/>
            <person name="Chen H.-C."/>
            <person name="Xu Z."/>
            <person name="Li H."/>
            <person name="Huang H."/>
            <person name="Zhang F."/>
            <person name="Xu H."/>
            <person name="Li N."/>
            <person name="Zhao C."/>
            <person name="Li S."/>
            <person name="Dong L."/>
            <person name="Huang Y."/>
            <person name="Li L."/>
            <person name="Xi Y."/>
            <person name="Qi Q."/>
            <person name="Li W."/>
            <person name="Zhang B."/>
            <person name="Hu W."/>
            <person name="Zhang Y."/>
            <person name="Tian X."/>
            <person name="Jiao Y."/>
            <person name="Liang X."/>
            <person name="Jin J."/>
            <person name="Gao L."/>
            <person name="Zheng W."/>
            <person name="Hao B."/>
            <person name="Liu S.-M."/>
            <person name="Wang W."/>
            <person name="Yuan L."/>
            <person name="Cao M."/>
            <person name="McDermott J."/>
            <person name="Samudrala R."/>
            <person name="Wang J."/>
            <person name="Wong G.K.-S."/>
            <person name="Yang H."/>
        </authorList>
    </citation>
    <scope>NUCLEOTIDE SEQUENCE [LARGE SCALE GENOMIC DNA]</scope>
    <source>
        <strain>cv. Nipponbare</strain>
    </source>
</reference>
<gene>
    <name evidence="4" type="primary">FAHD2</name>
    <name evidence="8" type="ordered locus">Os03g0829000</name>
    <name evidence="7" type="ordered locus">LOC_Os03g61330</name>
    <name evidence="9" type="ORF">OsJ_13211</name>
    <name evidence="5" type="ORF">OSJNBa0010E04.1</name>
    <name evidence="6" type="ORF">OSJNBb0027B08.34</name>
</gene>
<accession>Q10B63</accession>
<accession>Q850X1</accession>
<accession>Q8SAY6</accession>
<dbReference type="EC" id="5.3.2.2" evidence="2"/>
<dbReference type="EMBL" id="AC096687">
    <property type="protein sequence ID" value="AAL79746.1"/>
    <property type="molecule type" value="Genomic_DNA"/>
</dbReference>
<dbReference type="EMBL" id="AC133778">
    <property type="protein sequence ID" value="AAO39866.1"/>
    <property type="status" value="ALT_SEQ"/>
    <property type="molecule type" value="Genomic_DNA"/>
</dbReference>
<dbReference type="EMBL" id="DP000009">
    <property type="protein sequence ID" value="ABF99681.1"/>
    <property type="molecule type" value="Genomic_DNA"/>
</dbReference>
<dbReference type="EMBL" id="DP000009">
    <property type="protein sequence ID" value="ABF99682.1"/>
    <property type="molecule type" value="Genomic_DNA"/>
</dbReference>
<dbReference type="EMBL" id="AP008209">
    <property type="protein sequence ID" value="BAF13693.1"/>
    <property type="molecule type" value="Genomic_DNA"/>
</dbReference>
<dbReference type="EMBL" id="AP014959">
    <property type="protein sequence ID" value="BAS87180.1"/>
    <property type="molecule type" value="Genomic_DNA"/>
</dbReference>
<dbReference type="EMBL" id="CM000140">
    <property type="protein sequence ID" value="EAZ29150.1"/>
    <property type="molecule type" value="Genomic_DNA"/>
</dbReference>
<dbReference type="SMR" id="Q10B63"/>
<dbReference type="FunCoup" id="Q10B63">
    <property type="interactions" value="1783"/>
</dbReference>
<dbReference type="STRING" id="39947.Q10B63"/>
<dbReference type="PaxDb" id="39947-Q10B63"/>
<dbReference type="EnsemblPlants" id="Os03t0829000-01">
    <property type="protein sequence ID" value="Os03t0829000-01"/>
    <property type="gene ID" value="Os03g0829000"/>
</dbReference>
<dbReference type="EnsemblPlants" id="Os03t0829000-02">
    <property type="protein sequence ID" value="Os03t0829000-02"/>
    <property type="gene ID" value="Os03g0829000"/>
</dbReference>
<dbReference type="EnsemblPlants" id="Os03t0829000-03">
    <property type="protein sequence ID" value="Os03t0829000-03"/>
    <property type="gene ID" value="Os03g0829000"/>
</dbReference>
<dbReference type="Gramene" id="Os03t0829000-01">
    <property type="protein sequence ID" value="Os03t0829000-01"/>
    <property type="gene ID" value="Os03g0829000"/>
</dbReference>
<dbReference type="Gramene" id="Os03t0829000-02">
    <property type="protein sequence ID" value="Os03t0829000-02"/>
    <property type="gene ID" value="Os03g0829000"/>
</dbReference>
<dbReference type="Gramene" id="Os03t0829000-03">
    <property type="protein sequence ID" value="Os03t0829000-03"/>
    <property type="gene ID" value="Os03g0829000"/>
</dbReference>
<dbReference type="KEGG" id="dosa:Os03g0829000"/>
<dbReference type="KEGG" id="osa:4334655"/>
<dbReference type="eggNOG" id="KOG1535">
    <property type="taxonomic scope" value="Eukaryota"/>
</dbReference>
<dbReference type="HOGENOM" id="CLU_028458_5_0_1"/>
<dbReference type="InParanoid" id="Q10B63"/>
<dbReference type="OMA" id="NCRKVIC"/>
<dbReference type="OrthoDB" id="411064at2759"/>
<dbReference type="PlantReactome" id="R-OSA-1119506">
    <property type="pathway name" value="tyrosine degradation I"/>
</dbReference>
<dbReference type="Proteomes" id="UP000000763">
    <property type="component" value="Chromosome 3"/>
</dbReference>
<dbReference type="Proteomes" id="UP000007752">
    <property type="component" value="Chromosome 3"/>
</dbReference>
<dbReference type="Proteomes" id="UP000059680">
    <property type="component" value="Chromosome 3"/>
</dbReference>
<dbReference type="GO" id="GO:0005739">
    <property type="term" value="C:mitochondrion"/>
    <property type="evidence" value="ECO:0000318"/>
    <property type="project" value="GO_Central"/>
</dbReference>
<dbReference type="GO" id="GO:0018773">
    <property type="term" value="F:acetylpyruvate hydrolase activity"/>
    <property type="evidence" value="ECO:0000318"/>
    <property type="project" value="GO_Central"/>
</dbReference>
<dbReference type="GO" id="GO:0047621">
    <property type="term" value="F:acylpyruvate hydrolase activity"/>
    <property type="evidence" value="ECO:0007669"/>
    <property type="project" value="UniProtKB-EC"/>
</dbReference>
<dbReference type="GO" id="GO:0046872">
    <property type="term" value="F:metal ion binding"/>
    <property type="evidence" value="ECO:0007669"/>
    <property type="project" value="UniProtKB-KW"/>
</dbReference>
<dbReference type="GO" id="GO:0050163">
    <property type="term" value="F:oxaloacetate tautomerase activity"/>
    <property type="evidence" value="ECO:0007669"/>
    <property type="project" value="RHEA"/>
</dbReference>
<dbReference type="FunFam" id="3.90.850.10:FF:000003">
    <property type="entry name" value="Fumarylacetoacetate hydrolase domain-containing 1"/>
    <property type="match status" value="1"/>
</dbReference>
<dbReference type="Gene3D" id="3.90.850.10">
    <property type="entry name" value="Fumarylacetoacetase-like, C-terminal domain"/>
    <property type="match status" value="1"/>
</dbReference>
<dbReference type="InterPro" id="IPR011234">
    <property type="entry name" value="Fumarylacetoacetase-like_C"/>
</dbReference>
<dbReference type="InterPro" id="IPR036663">
    <property type="entry name" value="Fumarylacetoacetase_C_sf"/>
</dbReference>
<dbReference type="PANTHER" id="PTHR11820">
    <property type="entry name" value="ACYLPYRUVASE"/>
    <property type="match status" value="1"/>
</dbReference>
<dbReference type="PANTHER" id="PTHR11820:SF7">
    <property type="entry name" value="ACYLPYRUVASE FAHD1, MITOCHONDRIAL"/>
    <property type="match status" value="1"/>
</dbReference>
<dbReference type="Pfam" id="PF01557">
    <property type="entry name" value="FAA_hydrolase"/>
    <property type="match status" value="1"/>
</dbReference>
<dbReference type="SUPFAM" id="SSF56529">
    <property type="entry name" value="FAH"/>
    <property type="match status" value="1"/>
</dbReference>
<proteinExistence type="inferred from homology"/>
<evidence type="ECO:0000250" key="1">
    <source>
        <dbReference type="UniProtKB" id="Q6P587"/>
    </source>
</evidence>
<evidence type="ECO:0000250" key="2">
    <source>
        <dbReference type="UniProtKB" id="Q9LUR3"/>
    </source>
</evidence>
<evidence type="ECO:0000255" key="3"/>
<evidence type="ECO:0000305" key="4"/>
<evidence type="ECO:0000312" key="5">
    <source>
        <dbReference type="EMBL" id="AAL79746.1"/>
    </source>
</evidence>
<evidence type="ECO:0000312" key="6">
    <source>
        <dbReference type="EMBL" id="AAO39866.1"/>
    </source>
</evidence>
<evidence type="ECO:0000312" key="7">
    <source>
        <dbReference type="EMBL" id="ABF99681.1"/>
    </source>
</evidence>
<evidence type="ECO:0000312" key="8">
    <source>
        <dbReference type="EMBL" id="BAF13693.1"/>
    </source>
</evidence>
<evidence type="ECO:0000312" key="9">
    <source>
        <dbReference type="EMBL" id="EAZ29150.1"/>
    </source>
</evidence>